<name>AHPD_CORA7</name>
<accession>C3PGV9</accession>
<reference key="1">
    <citation type="journal article" date="2010" name="BMC Genomics">
        <title>Complete genome sequence and lifestyle of black-pigmented Corynebacterium aurimucosum ATCC 700975 (formerly C. nigricans CN-1) isolated from a vaginal swab of a woman with spontaneous abortion.</title>
        <authorList>
            <person name="Trost E."/>
            <person name="Gotker S."/>
            <person name="Schneider J."/>
            <person name="Schneiker-Bekel S."/>
            <person name="Szczepanowski R."/>
            <person name="Tilker A."/>
            <person name="Viehoever P."/>
            <person name="Arnold W."/>
            <person name="Bekel T."/>
            <person name="Blom J."/>
            <person name="Gartemann K.H."/>
            <person name="Linke B."/>
            <person name="Goesmann A."/>
            <person name="Puhler A."/>
            <person name="Shukla S.K."/>
            <person name="Tauch A."/>
        </authorList>
    </citation>
    <scope>NUCLEOTIDE SEQUENCE [LARGE SCALE GENOMIC DNA]</scope>
    <source>
        <strain>ATCC 700975 / DSM 44827 / CIP 107346 / CN-1</strain>
    </source>
</reference>
<organism>
    <name type="scientific">Corynebacterium aurimucosum (strain ATCC 700975 / DSM 44827 / CIP 107346 / CN-1)</name>
    <name type="common">Corynebacterium nigricans</name>
    <dbReference type="NCBI Taxonomy" id="548476"/>
    <lineage>
        <taxon>Bacteria</taxon>
        <taxon>Bacillati</taxon>
        <taxon>Actinomycetota</taxon>
        <taxon>Actinomycetes</taxon>
        <taxon>Mycobacteriales</taxon>
        <taxon>Corynebacteriaceae</taxon>
        <taxon>Corynebacterium</taxon>
    </lineage>
</organism>
<feature type="chain" id="PRO_1000187334" description="Alkyl hydroperoxide reductase AhpD">
    <location>
        <begin position="1"/>
        <end position="177"/>
    </location>
</feature>
<feature type="active site" description="Proton donor" evidence="2">
    <location>
        <position position="130"/>
    </location>
</feature>
<feature type="active site" description="Cysteine sulfenic acid (-SOH) intermediate" evidence="2">
    <location>
        <position position="133"/>
    </location>
</feature>
<feature type="disulfide bond" evidence="1">
    <location>
        <begin position="130"/>
        <end position="133"/>
    </location>
</feature>
<feature type="disulfide bond" description="Interchain (with AhpC); in linked form" evidence="2">
    <location>
        <position position="133"/>
    </location>
</feature>
<evidence type="ECO:0000250" key="1"/>
<evidence type="ECO:0000255" key="2">
    <source>
        <dbReference type="HAMAP-Rule" id="MF_01676"/>
    </source>
</evidence>
<dbReference type="EC" id="1.11.1.28" evidence="2"/>
<dbReference type="EMBL" id="CP001601">
    <property type="protein sequence ID" value="ACP33063.1"/>
    <property type="molecule type" value="Genomic_DNA"/>
</dbReference>
<dbReference type="RefSeq" id="WP_010190252.1">
    <property type="nucleotide sequence ID" value="NC_012590.1"/>
</dbReference>
<dbReference type="SMR" id="C3PGV9"/>
<dbReference type="STRING" id="548476.cauri_1470"/>
<dbReference type="GeneID" id="31924101"/>
<dbReference type="KEGG" id="car:cauri_1470"/>
<dbReference type="eggNOG" id="COG0599">
    <property type="taxonomic scope" value="Bacteria"/>
</dbReference>
<dbReference type="HOGENOM" id="CLU_105328_0_0_11"/>
<dbReference type="OrthoDB" id="9801997at2"/>
<dbReference type="Proteomes" id="UP000002077">
    <property type="component" value="Chromosome"/>
</dbReference>
<dbReference type="GO" id="GO:0008785">
    <property type="term" value="F:alkyl hydroperoxide reductase activity"/>
    <property type="evidence" value="ECO:0007669"/>
    <property type="project" value="UniProtKB-UniRule"/>
</dbReference>
<dbReference type="GO" id="GO:0015036">
    <property type="term" value="F:disulfide oxidoreductase activity"/>
    <property type="evidence" value="ECO:0007669"/>
    <property type="project" value="TreeGrafter"/>
</dbReference>
<dbReference type="GO" id="GO:0032843">
    <property type="term" value="F:hydroperoxide reductase activity"/>
    <property type="evidence" value="ECO:0007669"/>
    <property type="project" value="InterPro"/>
</dbReference>
<dbReference type="GO" id="GO:0051920">
    <property type="term" value="F:peroxiredoxin activity"/>
    <property type="evidence" value="ECO:0007669"/>
    <property type="project" value="InterPro"/>
</dbReference>
<dbReference type="GO" id="GO:0045454">
    <property type="term" value="P:cell redox homeostasis"/>
    <property type="evidence" value="ECO:0007669"/>
    <property type="project" value="TreeGrafter"/>
</dbReference>
<dbReference type="GO" id="GO:0006979">
    <property type="term" value="P:response to oxidative stress"/>
    <property type="evidence" value="ECO:0007669"/>
    <property type="project" value="InterPro"/>
</dbReference>
<dbReference type="Gene3D" id="1.20.1290.10">
    <property type="entry name" value="AhpD-like"/>
    <property type="match status" value="1"/>
</dbReference>
<dbReference type="HAMAP" id="MF_01676">
    <property type="entry name" value="AhpD"/>
    <property type="match status" value="1"/>
</dbReference>
<dbReference type="InterPro" id="IPR004674">
    <property type="entry name" value="AhpD"/>
</dbReference>
<dbReference type="InterPro" id="IPR029032">
    <property type="entry name" value="AhpD-like"/>
</dbReference>
<dbReference type="InterPro" id="IPR004675">
    <property type="entry name" value="AhpD_core"/>
</dbReference>
<dbReference type="InterPro" id="IPR003779">
    <property type="entry name" value="CMD-like"/>
</dbReference>
<dbReference type="NCBIfam" id="TIGR00777">
    <property type="entry name" value="ahpD"/>
    <property type="match status" value="1"/>
</dbReference>
<dbReference type="NCBIfam" id="TIGR00778">
    <property type="entry name" value="ahpD_dom"/>
    <property type="match status" value="1"/>
</dbReference>
<dbReference type="PANTHER" id="PTHR33930">
    <property type="entry name" value="ALKYL HYDROPEROXIDE REDUCTASE AHPD"/>
    <property type="match status" value="1"/>
</dbReference>
<dbReference type="PANTHER" id="PTHR33930:SF7">
    <property type="entry name" value="ALKYL HYDROPEROXIDE REDUCTASE AHPD"/>
    <property type="match status" value="1"/>
</dbReference>
<dbReference type="Pfam" id="PF02627">
    <property type="entry name" value="CMD"/>
    <property type="match status" value="1"/>
</dbReference>
<dbReference type="SUPFAM" id="SSF69118">
    <property type="entry name" value="AhpD-like"/>
    <property type="match status" value="1"/>
</dbReference>
<comment type="function">
    <text evidence="2">Antioxidant protein with alkyl hydroperoxidase activity. Required for the reduction of the AhpC active site cysteine residues and for the regeneration of the AhpC enzyme activity.</text>
</comment>
<comment type="catalytic activity">
    <reaction evidence="2">
        <text>N(6)-[(R)-dihydrolipoyl]-L-lysyl-[lipoyl-carrier protein] + a hydroperoxide = N(6)-[(R)-lipoyl]-L-lysyl-[lipoyl-carrier protein] + an alcohol + H2O</text>
        <dbReference type="Rhea" id="RHEA:62636"/>
        <dbReference type="Rhea" id="RHEA-COMP:10502"/>
        <dbReference type="Rhea" id="RHEA-COMP:16355"/>
        <dbReference type="ChEBI" id="CHEBI:15377"/>
        <dbReference type="ChEBI" id="CHEBI:30879"/>
        <dbReference type="ChEBI" id="CHEBI:35924"/>
        <dbReference type="ChEBI" id="CHEBI:83099"/>
        <dbReference type="ChEBI" id="CHEBI:83100"/>
        <dbReference type="EC" id="1.11.1.28"/>
    </reaction>
</comment>
<comment type="subunit">
    <text evidence="2">Homotrimer.</text>
</comment>
<comment type="similarity">
    <text evidence="2">Belongs to the AhpD family.</text>
</comment>
<proteinExistence type="inferred from homology"/>
<sequence>MSIENLKSALPAYAKDQKLNIGSLTRSTELNEEQLWGSLVAAAAATRNDLVLSEILEEAREHLSEEAVDAALGSATVMAMNNVAYRAKSWLGDDFAQVKFGLRMNIIAKPGVDKATFELWSTVVSAINGCEHCLSAHANTLLEEGVTKEQIWEGIKVAGVVEAVAQALQAEAVRSAE</sequence>
<keyword id="KW-0049">Antioxidant</keyword>
<keyword id="KW-1015">Disulfide bond</keyword>
<keyword id="KW-0560">Oxidoreductase</keyword>
<keyword id="KW-0575">Peroxidase</keyword>
<keyword id="KW-0676">Redox-active center</keyword>
<keyword id="KW-1185">Reference proteome</keyword>
<protein>
    <recommendedName>
        <fullName evidence="2">Alkyl hydroperoxide reductase AhpD</fullName>
        <ecNumber evidence="2">1.11.1.28</ecNumber>
    </recommendedName>
    <alternativeName>
        <fullName evidence="2">Alkylhydroperoxidase AhpD</fullName>
    </alternativeName>
</protein>
<gene>
    <name evidence="2" type="primary">ahpD</name>
    <name type="ordered locus">cauri_1470</name>
</gene>